<accession>B9KJ94</accession>
<dbReference type="EC" id="5.4.2.10" evidence="1"/>
<dbReference type="EMBL" id="CP001079">
    <property type="protein sequence ID" value="ACM49556.1"/>
    <property type="molecule type" value="Genomic_DNA"/>
</dbReference>
<dbReference type="RefSeq" id="WP_010268183.1">
    <property type="nucleotide sequence ID" value="NZ_AFMS01000060.1"/>
</dbReference>
<dbReference type="SMR" id="B9KJ94"/>
<dbReference type="STRING" id="320483.AMF_721"/>
<dbReference type="GeneID" id="7397902"/>
<dbReference type="KEGG" id="amf:AMF_721"/>
<dbReference type="PATRIC" id="fig|320483.3.peg.822"/>
<dbReference type="eggNOG" id="COG1109">
    <property type="taxonomic scope" value="Bacteria"/>
</dbReference>
<dbReference type="HOGENOM" id="CLU_016950_7_0_5"/>
<dbReference type="Proteomes" id="UP000007307">
    <property type="component" value="Chromosome"/>
</dbReference>
<dbReference type="GO" id="GO:0005829">
    <property type="term" value="C:cytosol"/>
    <property type="evidence" value="ECO:0007669"/>
    <property type="project" value="TreeGrafter"/>
</dbReference>
<dbReference type="GO" id="GO:0000287">
    <property type="term" value="F:magnesium ion binding"/>
    <property type="evidence" value="ECO:0007669"/>
    <property type="project" value="UniProtKB-UniRule"/>
</dbReference>
<dbReference type="GO" id="GO:0008966">
    <property type="term" value="F:phosphoglucosamine mutase activity"/>
    <property type="evidence" value="ECO:0007669"/>
    <property type="project" value="UniProtKB-UniRule"/>
</dbReference>
<dbReference type="GO" id="GO:0004615">
    <property type="term" value="F:phosphomannomutase activity"/>
    <property type="evidence" value="ECO:0007669"/>
    <property type="project" value="TreeGrafter"/>
</dbReference>
<dbReference type="GO" id="GO:0005975">
    <property type="term" value="P:carbohydrate metabolic process"/>
    <property type="evidence" value="ECO:0007669"/>
    <property type="project" value="InterPro"/>
</dbReference>
<dbReference type="GO" id="GO:0009252">
    <property type="term" value="P:peptidoglycan biosynthetic process"/>
    <property type="evidence" value="ECO:0007669"/>
    <property type="project" value="TreeGrafter"/>
</dbReference>
<dbReference type="GO" id="GO:0006048">
    <property type="term" value="P:UDP-N-acetylglucosamine biosynthetic process"/>
    <property type="evidence" value="ECO:0007669"/>
    <property type="project" value="TreeGrafter"/>
</dbReference>
<dbReference type="CDD" id="cd05802">
    <property type="entry name" value="GlmM"/>
    <property type="match status" value="1"/>
</dbReference>
<dbReference type="FunFam" id="3.40.120.10:FF:000001">
    <property type="entry name" value="Phosphoglucosamine mutase"/>
    <property type="match status" value="1"/>
</dbReference>
<dbReference type="FunFam" id="3.40.120.10:FF:000003">
    <property type="entry name" value="Phosphoglucosamine mutase"/>
    <property type="match status" value="1"/>
</dbReference>
<dbReference type="Gene3D" id="3.40.120.10">
    <property type="entry name" value="Alpha-D-Glucose-1,6-Bisphosphate, subunit A, domain 3"/>
    <property type="match status" value="3"/>
</dbReference>
<dbReference type="Gene3D" id="3.30.310.50">
    <property type="entry name" value="Alpha-D-phosphohexomutase, C-terminal domain"/>
    <property type="match status" value="1"/>
</dbReference>
<dbReference type="HAMAP" id="MF_01554_B">
    <property type="entry name" value="GlmM_B"/>
    <property type="match status" value="1"/>
</dbReference>
<dbReference type="InterPro" id="IPR005844">
    <property type="entry name" value="A-D-PHexomutase_a/b/a-I"/>
</dbReference>
<dbReference type="InterPro" id="IPR016055">
    <property type="entry name" value="A-D-PHexomutase_a/b/a-I/II/III"/>
</dbReference>
<dbReference type="InterPro" id="IPR005845">
    <property type="entry name" value="A-D-PHexomutase_a/b/a-II"/>
</dbReference>
<dbReference type="InterPro" id="IPR005846">
    <property type="entry name" value="A-D-PHexomutase_a/b/a-III"/>
</dbReference>
<dbReference type="InterPro" id="IPR005843">
    <property type="entry name" value="A-D-PHexomutase_C"/>
</dbReference>
<dbReference type="InterPro" id="IPR036900">
    <property type="entry name" value="A-D-PHexomutase_C_sf"/>
</dbReference>
<dbReference type="InterPro" id="IPR005841">
    <property type="entry name" value="Alpha-D-phosphohexomutase_SF"/>
</dbReference>
<dbReference type="InterPro" id="IPR006352">
    <property type="entry name" value="GlmM_bact"/>
</dbReference>
<dbReference type="InterPro" id="IPR050060">
    <property type="entry name" value="Phosphoglucosamine_mutase"/>
</dbReference>
<dbReference type="NCBIfam" id="TIGR01455">
    <property type="entry name" value="glmM"/>
    <property type="match status" value="1"/>
</dbReference>
<dbReference type="NCBIfam" id="NF008139">
    <property type="entry name" value="PRK10887.1"/>
    <property type="match status" value="1"/>
</dbReference>
<dbReference type="PANTHER" id="PTHR42946:SF1">
    <property type="entry name" value="PHOSPHOGLUCOMUTASE (ALPHA-D-GLUCOSE-1,6-BISPHOSPHATE-DEPENDENT)"/>
    <property type="match status" value="1"/>
</dbReference>
<dbReference type="PANTHER" id="PTHR42946">
    <property type="entry name" value="PHOSPHOHEXOSE MUTASE"/>
    <property type="match status" value="1"/>
</dbReference>
<dbReference type="Pfam" id="PF02878">
    <property type="entry name" value="PGM_PMM_I"/>
    <property type="match status" value="1"/>
</dbReference>
<dbReference type="Pfam" id="PF02879">
    <property type="entry name" value="PGM_PMM_II"/>
    <property type="match status" value="1"/>
</dbReference>
<dbReference type="Pfam" id="PF02880">
    <property type="entry name" value="PGM_PMM_III"/>
    <property type="match status" value="1"/>
</dbReference>
<dbReference type="Pfam" id="PF00408">
    <property type="entry name" value="PGM_PMM_IV"/>
    <property type="match status" value="1"/>
</dbReference>
<dbReference type="PRINTS" id="PR00509">
    <property type="entry name" value="PGMPMM"/>
</dbReference>
<dbReference type="SUPFAM" id="SSF55957">
    <property type="entry name" value="Phosphoglucomutase, C-terminal domain"/>
    <property type="match status" value="1"/>
</dbReference>
<dbReference type="SUPFAM" id="SSF53738">
    <property type="entry name" value="Phosphoglucomutase, first 3 domains"/>
    <property type="match status" value="3"/>
</dbReference>
<sequence length="452" mass="48800">MNIFGTDGVRGRANVYPMDPITVLRLGMAIGLEARKVGTQVVLGKDTRISGYMVESALVSGLVAMGVNVGLLGPMPTAAIATLVRNLRASMGVVISASHNSYLDNGVKIFDSEGIKIPLELEEVLESNVRAELSSDLAQVRGMGKVYRIAGAVGRYIEFVKGTFPKRLKLSGMKIVVDCANGAAYHIGGEVFWELGADVVVIGNKPDGLNINHNCGSLHPEGMVQKVLEEGADIGIALDGDADRVVVCDEKGRLVDGDQVIASIMRHLRATKSITDAAVTTMSSKSIDSYARELGVRLHRSEVGDRHLVDTMRQHSCSVGGEKSGHIILWEHSTTSDSLVAALQILSIMLLENKSASSIFGDFVPMPRVHRDIPYSMEFDHIARLIGPTLSDVEQALGRVNGRVIFRRSGTERLIRCVIEGEDPKLVALVADELSIKLRELGVENGVEPEMQ</sequence>
<name>GLMM_ANAMF</name>
<proteinExistence type="inferred from homology"/>
<organism>
    <name type="scientific">Anaplasma marginale (strain Florida)</name>
    <dbReference type="NCBI Taxonomy" id="320483"/>
    <lineage>
        <taxon>Bacteria</taxon>
        <taxon>Pseudomonadati</taxon>
        <taxon>Pseudomonadota</taxon>
        <taxon>Alphaproteobacteria</taxon>
        <taxon>Rickettsiales</taxon>
        <taxon>Anaplasmataceae</taxon>
        <taxon>Anaplasma</taxon>
    </lineage>
</organism>
<protein>
    <recommendedName>
        <fullName evidence="1">Phosphoglucosamine mutase</fullName>
        <ecNumber evidence="1">5.4.2.10</ecNumber>
    </recommendedName>
</protein>
<gene>
    <name evidence="1" type="primary">glmM</name>
    <name type="ordered locus">AMF_721</name>
</gene>
<feature type="chain" id="PRO_1000185345" description="Phosphoglucosamine mutase">
    <location>
        <begin position="1"/>
        <end position="452"/>
    </location>
</feature>
<feature type="active site" description="Phosphoserine intermediate" evidence="1">
    <location>
        <position position="98"/>
    </location>
</feature>
<feature type="binding site" description="via phosphate group" evidence="1">
    <location>
        <position position="98"/>
    </location>
    <ligand>
        <name>Mg(2+)</name>
        <dbReference type="ChEBI" id="CHEBI:18420"/>
    </ligand>
</feature>
<feature type="binding site" evidence="1">
    <location>
        <position position="239"/>
    </location>
    <ligand>
        <name>Mg(2+)</name>
        <dbReference type="ChEBI" id="CHEBI:18420"/>
    </ligand>
</feature>
<feature type="binding site" evidence="1">
    <location>
        <position position="241"/>
    </location>
    <ligand>
        <name>Mg(2+)</name>
        <dbReference type="ChEBI" id="CHEBI:18420"/>
    </ligand>
</feature>
<feature type="binding site" evidence="1">
    <location>
        <position position="243"/>
    </location>
    <ligand>
        <name>Mg(2+)</name>
        <dbReference type="ChEBI" id="CHEBI:18420"/>
    </ligand>
</feature>
<feature type="modified residue" description="Phosphoserine" evidence="1">
    <location>
        <position position="98"/>
    </location>
</feature>
<reference key="1">
    <citation type="journal article" date="2009" name="BMC Genomics">
        <title>Conservation in the face of diversity: multistrain analysis of an intracellular bacterium.</title>
        <authorList>
            <person name="Dark M.J."/>
            <person name="Herndon D.R."/>
            <person name="Kappmeyer L.S."/>
            <person name="Gonzales M.P."/>
            <person name="Nordeen E."/>
            <person name="Palmer G.H."/>
            <person name="Knowles D.P. Jr."/>
            <person name="Brayton K.A."/>
        </authorList>
    </citation>
    <scope>NUCLEOTIDE SEQUENCE [LARGE SCALE GENOMIC DNA]</scope>
    <source>
        <strain>Florida</strain>
    </source>
</reference>
<comment type="function">
    <text evidence="1">Catalyzes the conversion of glucosamine-6-phosphate to glucosamine-1-phosphate.</text>
</comment>
<comment type="catalytic activity">
    <reaction evidence="1">
        <text>alpha-D-glucosamine 1-phosphate = D-glucosamine 6-phosphate</text>
        <dbReference type="Rhea" id="RHEA:23424"/>
        <dbReference type="ChEBI" id="CHEBI:58516"/>
        <dbReference type="ChEBI" id="CHEBI:58725"/>
        <dbReference type="EC" id="5.4.2.10"/>
    </reaction>
</comment>
<comment type="cofactor">
    <cofactor evidence="1">
        <name>Mg(2+)</name>
        <dbReference type="ChEBI" id="CHEBI:18420"/>
    </cofactor>
    <text evidence="1">Binds 1 Mg(2+) ion per subunit.</text>
</comment>
<comment type="PTM">
    <text evidence="1">Activated by phosphorylation.</text>
</comment>
<comment type="similarity">
    <text evidence="1">Belongs to the phosphohexose mutase family.</text>
</comment>
<evidence type="ECO:0000255" key="1">
    <source>
        <dbReference type="HAMAP-Rule" id="MF_01554"/>
    </source>
</evidence>
<keyword id="KW-0413">Isomerase</keyword>
<keyword id="KW-0460">Magnesium</keyword>
<keyword id="KW-0479">Metal-binding</keyword>
<keyword id="KW-0597">Phosphoprotein</keyword>
<keyword id="KW-1185">Reference proteome</keyword>